<accession>P04576</accession>
<comment type="subcellular location">
    <subcellularLocation>
        <location>Periplasm</location>
    </subcellularLocation>
</comment>
<comment type="miscellaneous">
    <text>The molecular weight of the complete protein is approximately 30 kDa, there is a single affinity site for myo-inositol.</text>
</comment>
<comment type="similarity">
    <text evidence="1">Belongs to the bacterial solute-binding protein 2 family.</text>
</comment>
<sequence>DMKIGVSMSQFDDTHLTYLQQSMDEKAKSYPDGVVLL</sequence>
<name>MIBP_PSESP</name>
<dbReference type="SMR" id="P04576"/>
<dbReference type="GO" id="GO:0042597">
    <property type="term" value="C:periplasmic space"/>
    <property type="evidence" value="ECO:0007669"/>
    <property type="project" value="UniProtKB-SubCell"/>
</dbReference>
<organism>
    <name type="scientific">Pseudomonas sp</name>
    <dbReference type="NCBI Taxonomy" id="306"/>
    <lineage>
        <taxon>Bacteria</taxon>
        <taxon>Pseudomonadati</taxon>
        <taxon>Pseudomonadota</taxon>
        <taxon>Gammaproteobacteria</taxon>
        <taxon>Pseudomonadales</taxon>
        <taxon>Pseudomonadaceae</taxon>
        <taxon>Pseudomonas</taxon>
    </lineage>
</organism>
<reference key="1">
    <citation type="journal article" date="1984" name="J. Bacteriol.">
        <title>Purification and properties of the myo-inositol-binding protein from a Pseudomonas sp.</title>
        <authorList>
            <person name="Deshusses J."/>
            <person name="Belet M."/>
        </authorList>
    </citation>
    <scope>PROTEIN SEQUENCE</scope>
</reference>
<evidence type="ECO:0000305" key="1"/>
<protein>
    <recommendedName>
        <fullName>Myo-inositol-binding protein</fullName>
    </recommendedName>
</protein>
<feature type="chain" id="PRO_0000062775" description="Myo-inositol-binding protein">
    <location>
        <begin position="1"/>
        <end position="37" status="greater than"/>
    </location>
</feature>
<feature type="non-terminal residue">
    <location>
        <position position="37"/>
    </location>
</feature>
<keyword id="KW-0903">Direct protein sequencing</keyword>
<keyword id="KW-0574">Periplasm</keyword>
<keyword id="KW-0813">Transport</keyword>
<proteinExistence type="evidence at protein level"/>